<reference key="1">
    <citation type="journal article" date="2006" name="PLoS Genet.">
        <title>The complete genome sequence and comparative genome analysis of the high pathogenicity Yersinia enterocolitica strain 8081.</title>
        <authorList>
            <person name="Thomson N.R."/>
            <person name="Howard S."/>
            <person name="Wren B.W."/>
            <person name="Holden M.T.G."/>
            <person name="Crossman L."/>
            <person name="Challis G.L."/>
            <person name="Churcher C."/>
            <person name="Mungall K."/>
            <person name="Brooks K."/>
            <person name="Chillingworth T."/>
            <person name="Feltwell T."/>
            <person name="Abdellah Z."/>
            <person name="Hauser H."/>
            <person name="Jagels K."/>
            <person name="Maddison M."/>
            <person name="Moule S."/>
            <person name="Sanders M."/>
            <person name="Whitehead S."/>
            <person name="Quail M.A."/>
            <person name="Dougan G."/>
            <person name="Parkhill J."/>
            <person name="Prentice M.B."/>
        </authorList>
    </citation>
    <scope>NUCLEOTIDE SEQUENCE [LARGE SCALE GENOMIC DNA]</scope>
    <source>
        <strain>NCTC 13174 / 8081</strain>
    </source>
</reference>
<accession>A1JPY2</accession>
<feature type="chain" id="PRO_1000018310" description="Tryptophan synthase alpha chain">
    <location>
        <begin position="1"/>
        <end position="268"/>
    </location>
</feature>
<feature type="active site" description="Proton acceptor" evidence="1">
    <location>
        <position position="49"/>
    </location>
</feature>
<feature type="active site" description="Proton acceptor" evidence="1">
    <location>
        <position position="60"/>
    </location>
</feature>
<organism>
    <name type="scientific">Yersinia enterocolitica serotype O:8 / biotype 1B (strain NCTC 13174 / 8081)</name>
    <dbReference type="NCBI Taxonomy" id="393305"/>
    <lineage>
        <taxon>Bacteria</taxon>
        <taxon>Pseudomonadati</taxon>
        <taxon>Pseudomonadota</taxon>
        <taxon>Gammaproteobacteria</taxon>
        <taxon>Enterobacterales</taxon>
        <taxon>Yersiniaceae</taxon>
        <taxon>Yersinia</taxon>
    </lineage>
</organism>
<protein>
    <recommendedName>
        <fullName evidence="1">Tryptophan synthase alpha chain</fullName>
        <ecNumber evidence="1">4.2.1.20</ecNumber>
    </recommendedName>
</protein>
<proteinExistence type="inferred from homology"/>
<comment type="function">
    <text evidence="1">The alpha subunit is responsible for the aldol cleavage of indoleglycerol phosphate to indole and glyceraldehyde 3-phosphate.</text>
</comment>
<comment type="catalytic activity">
    <reaction evidence="1">
        <text>(1S,2R)-1-C-(indol-3-yl)glycerol 3-phosphate + L-serine = D-glyceraldehyde 3-phosphate + L-tryptophan + H2O</text>
        <dbReference type="Rhea" id="RHEA:10532"/>
        <dbReference type="ChEBI" id="CHEBI:15377"/>
        <dbReference type="ChEBI" id="CHEBI:33384"/>
        <dbReference type="ChEBI" id="CHEBI:57912"/>
        <dbReference type="ChEBI" id="CHEBI:58866"/>
        <dbReference type="ChEBI" id="CHEBI:59776"/>
        <dbReference type="EC" id="4.2.1.20"/>
    </reaction>
</comment>
<comment type="pathway">
    <text evidence="1">Amino-acid biosynthesis; L-tryptophan biosynthesis; L-tryptophan from chorismate: step 5/5.</text>
</comment>
<comment type="subunit">
    <text evidence="1">Tetramer of two alpha and two beta chains.</text>
</comment>
<comment type="similarity">
    <text evidence="1">Belongs to the TrpA family.</text>
</comment>
<gene>
    <name evidence="1" type="primary">trpA</name>
    <name type="ordered locus">YE2214</name>
</gene>
<sequence length="268" mass="28536">MERYQQLFKQLAAKNEGAFVPFVQLGDPTPALSLEIIDTLIAAGADALELGIPFSDPLADGPTIQNAALRAFAAGVTPGICFEMLAEIRKKHPTIPIGLLMYANLVFHNGIDTFYQRCADVGVDSVLIADVPFEESLPFRTAALRHGIAPIFICPPNADDDLLREIASHGRGYTYLLSRAGVTGAENHGQLPLNHLIDKLCEYNAAPALQGFGISEPEQVKISLAAGAAGAISGSAIVKIIENNVSQPAEMLAQLANFVTNMKAATRS</sequence>
<dbReference type="EC" id="4.2.1.20" evidence="1"/>
<dbReference type="EMBL" id="AM286415">
    <property type="protein sequence ID" value="CAL12282.1"/>
    <property type="molecule type" value="Genomic_DNA"/>
</dbReference>
<dbReference type="RefSeq" id="WP_005169334.1">
    <property type="nucleotide sequence ID" value="NC_008800.1"/>
</dbReference>
<dbReference type="RefSeq" id="YP_001006452.1">
    <property type="nucleotide sequence ID" value="NC_008800.1"/>
</dbReference>
<dbReference type="SMR" id="A1JPY2"/>
<dbReference type="KEGG" id="yen:YE2214"/>
<dbReference type="PATRIC" id="fig|393305.7.peg.2379"/>
<dbReference type="eggNOG" id="COG0159">
    <property type="taxonomic scope" value="Bacteria"/>
</dbReference>
<dbReference type="HOGENOM" id="CLU_016734_0_4_6"/>
<dbReference type="OrthoDB" id="9804578at2"/>
<dbReference type="UniPathway" id="UPA00035">
    <property type="reaction ID" value="UER00044"/>
</dbReference>
<dbReference type="Proteomes" id="UP000000642">
    <property type="component" value="Chromosome"/>
</dbReference>
<dbReference type="GO" id="GO:0005829">
    <property type="term" value="C:cytosol"/>
    <property type="evidence" value="ECO:0007669"/>
    <property type="project" value="TreeGrafter"/>
</dbReference>
<dbReference type="GO" id="GO:0004834">
    <property type="term" value="F:tryptophan synthase activity"/>
    <property type="evidence" value="ECO:0007669"/>
    <property type="project" value="UniProtKB-UniRule"/>
</dbReference>
<dbReference type="CDD" id="cd04724">
    <property type="entry name" value="Tryptophan_synthase_alpha"/>
    <property type="match status" value="1"/>
</dbReference>
<dbReference type="FunFam" id="3.20.20.70:FF:000037">
    <property type="entry name" value="Tryptophan synthase alpha chain"/>
    <property type="match status" value="1"/>
</dbReference>
<dbReference type="Gene3D" id="3.20.20.70">
    <property type="entry name" value="Aldolase class I"/>
    <property type="match status" value="1"/>
</dbReference>
<dbReference type="HAMAP" id="MF_00131">
    <property type="entry name" value="Trp_synth_alpha"/>
    <property type="match status" value="1"/>
</dbReference>
<dbReference type="InterPro" id="IPR013785">
    <property type="entry name" value="Aldolase_TIM"/>
</dbReference>
<dbReference type="InterPro" id="IPR011060">
    <property type="entry name" value="RibuloseP-bd_barrel"/>
</dbReference>
<dbReference type="InterPro" id="IPR018204">
    <property type="entry name" value="Trp_synthase_alpha_AS"/>
</dbReference>
<dbReference type="InterPro" id="IPR002028">
    <property type="entry name" value="Trp_synthase_suA"/>
</dbReference>
<dbReference type="NCBIfam" id="TIGR00262">
    <property type="entry name" value="trpA"/>
    <property type="match status" value="1"/>
</dbReference>
<dbReference type="PANTHER" id="PTHR43406:SF1">
    <property type="entry name" value="TRYPTOPHAN SYNTHASE ALPHA CHAIN, CHLOROPLASTIC"/>
    <property type="match status" value="1"/>
</dbReference>
<dbReference type="PANTHER" id="PTHR43406">
    <property type="entry name" value="TRYPTOPHAN SYNTHASE, ALPHA CHAIN"/>
    <property type="match status" value="1"/>
</dbReference>
<dbReference type="Pfam" id="PF00290">
    <property type="entry name" value="Trp_syntA"/>
    <property type="match status" value="1"/>
</dbReference>
<dbReference type="SUPFAM" id="SSF51366">
    <property type="entry name" value="Ribulose-phoshate binding barrel"/>
    <property type="match status" value="1"/>
</dbReference>
<dbReference type="PROSITE" id="PS00167">
    <property type="entry name" value="TRP_SYNTHASE_ALPHA"/>
    <property type="match status" value="1"/>
</dbReference>
<keyword id="KW-0028">Amino-acid biosynthesis</keyword>
<keyword id="KW-0057">Aromatic amino acid biosynthesis</keyword>
<keyword id="KW-0456">Lyase</keyword>
<keyword id="KW-0822">Tryptophan biosynthesis</keyword>
<name>TRPA_YERE8</name>
<evidence type="ECO:0000255" key="1">
    <source>
        <dbReference type="HAMAP-Rule" id="MF_00131"/>
    </source>
</evidence>